<sequence length="423" mass="48263">MLDLKYITENIDEVILKLNTRGGDFSHLRQLIDLQEERKSVIKEVEDLKAKRNEYSKEIGELKRQKQDASHVLLKVESIKSDIPALELKLGEIDEKINKELIVLPNIPADDVPVGKDESANIEIKKWGTIRHFDFEVKDHTQLGEALNILDFERATKITGPRFVVDKGLGARLERALINFMIDTHAYTHGYTEIIPPFIVNDKSMYATGQFPKFKEDAFKLEGFDWYLNPTAEVPTINLFRDEIIDNDALPIQYVAYTTAFRSEAGSAGRDTKGILRQHQFNKVELIKFARPEDSEQAHQDMLANSERILQLLNIPYRVVVLSTGDMGFGMSKTYDIEVWLPGQNMYREIGSISNARDFQARRANIRFKRSKDAKTEYVHTLNGSGLAVGRTMIAVLENYQNQDGSITIPEVLKPYMGVEVIK</sequence>
<dbReference type="EC" id="6.1.1.11" evidence="1"/>
<dbReference type="EMBL" id="CP000896">
    <property type="protein sequence ID" value="ABX80652.1"/>
    <property type="molecule type" value="Genomic_DNA"/>
</dbReference>
<dbReference type="RefSeq" id="WP_012241983.1">
    <property type="nucleotide sequence ID" value="NC_010163.1"/>
</dbReference>
<dbReference type="SMR" id="A9NE72"/>
<dbReference type="STRING" id="441768.ACL_0009"/>
<dbReference type="GeneID" id="41338213"/>
<dbReference type="KEGG" id="acl:ACL_0009"/>
<dbReference type="eggNOG" id="COG0172">
    <property type="taxonomic scope" value="Bacteria"/>
</dbReference>
<dbReference type="HOGENOM" id="CLU_023797_1_1_14"/>
<dbReference type="OrthoDB" id="9804647at2"/>
<dbReference type="UniPathway" id="UPA00906">
    <property type="reaction ID" value="UER00895"/>
</dbReference>
<dbReference type="Proteomes" id="UP000008558">
    <property type="component" value="Chromosome"/>
</dbReference>
<dbReference type="GO" id="GO:0005737">
    <property type="term" value="C:cytoplasm"/>
    <property type="evidence" value="ECO:0007669"/>
    <property type="project" value="UniProtKB-SubCell"/>
</dbReference>
<dbReference type="GO" id="GO:0005524">
    <property type="term" value="F:ATP binding"/>
    <property type="evidence" value="ECO:0007669"/>
    <property type="project" value="UniProtKB-UniRule"/>
</dbReference>
<dbReference type="GO" id="GO:0004828">
    <property type="term" value="F:serine-tRNA ligase activity"/>
    <property type="evidence" value="ECO:0007669"/>
    <property type="project" value="UniProtKB-UniRule"/>
</dbReference>
<dbReference type="GO" id="GO:0016260">
    <property type="term" value="P:selenocysteine biosynthetic process"/>
    <property type="evidence" value="ECO:0007669"/>
    <property type="project" value="UniProtKB-UniRule"/>
</dbReference>
<dbReference type="GO" id="GO:0006434">
    <property type="term" value="P:seryl-tRNA aminoacylation"/>
    <property type="evidence" value="ECO:0007669"/>
    <property type="project" value="UniProtKB-UniRule"/>
</dbReference>
<dbReference type="CDD" id="cd00770">
    <property type="entry name" value="SerRS_core"/>
    <property type="match status" value="1"/>
</dbReference>
<dbReference type="Gene3D" id="3.30.930.10">
    <property type="entry name" value="Bira Bifunctional Protein, Domain 2"/>
    <property type="match status" value="1"/>
</dbReference>
<dbReference type="Gene3D" id="1.10.287.40">
    <property type="entry name" value="Serine-tRNA synthetase, tRNA binding domain"/>
    <property type="match status" value="1"/>
</dbReference>
<dbReference type="HAMAP" id="MF_00176">
    <property type="entry name" value="Ser_tRNA_synth_type1"/>
    <property type="match status" value="1"/>
</dbReference>
<dbReference type="InterPro" id="IPR002314">
    <property type="entry name" value="aa-tRNA-synt_IIb"/>
</dbReference>
<dbReference type="InterPro" id="IPR006195">
    <property type="entry name" value="aa-tRNA-synth_II"/>
</dbReference>
<dbReference type="InterPro" id="IPR045864">
    <property type="entry name" value="aa-tRNA-synth_II/BPL/LPL"/>
</dbReference>
<dbReference type="InterPro" id="IPR002317">
    <property type="entry name" value="Ser-tRNA-ligase_type_1"/>
</dbReference>
<dbReference type="InterPro" id="IPR015866">
    <property type="entry name" value="Ser-tRNA-synth_1_N"/>
</dbReference>
<dbReference type="InterPro" id="IPR042103">
    <property type="entry name" value="SerRS_1_N_sf"/>
</dbReference>
<dbReference type="InterPro" id="IPR033729">
    <property type="entry name" value="SerRS_core"/>
</dbReference>
<dbReference type="InterPro" id="IPR010978">
    <property type="entry name" value="tRNA-bd_arm"/>
</dbReference>
<dbReference type="NCBIfam" id="TIGR00414">
    <property type="entry name" value="serS"/>
    <property type="match status" value="1"/>
</dbReference>
<dbReference type="PANTHER" id="PTHR43697:SF1">
    <property type="entry name" value="SERINE--TRNA LIGASE"/>
    <property type="match status" value="1"/>
</dbReference>
<dbReference type="PANTHER" id="PTHR43697">
    <property type="entry name" value="SERYL-TRNA SYNTHETASE"/>
    <property type="match status" value="1"/>
</dbReference>
<dbReference type="Pfam" id="PF02403">
    <property type="entry name" value="Seryl_tRNA_N"/>
    <property type="match status" value="1"/>
</dbReference>
<dbReference type="Pfam" id="PF00587">
    <property type="entry name" value="tRNA-synt_2b"/>
    <property type="match status" value="1"/>
</dbReference>
<dbReference type="PIRSF" id="PIRSF001529">
    <property type="entry name" value="Ser-tRNA-synth_IIa"/>
    <property type="match status" value="1"/>
</dbReference>
<dbReference type="PRINTS" id="PR00981">
    <property type="entry name" value="TRNASYNTHSER"/>
</dbReference>
<dbReference type="SUPFAM" id="SSF55681">
    <property type="entry name" value="Class II aaRS and biotin synthetases"/>
    <property type="match status" value="1"/>
</dbReference>
<dbReference type="SUPFAM" id="SSF46589">
    <property type="entry name" value="tRNA-binding arm"/>
    <property type="match status" value="1"/>
</dbReference>
<dbReference type="PROSITE" id="PS50862">
    <property type="entry name" value="AA_TRNA_LIGASE_II"/>
    <property type="match status" value="1"/>
</dbReference>
<gene>
    <name evidence="1" type="primary">serS</name>
    <name type="ordered locus">ACL_0009</name>
</gene>
<feature type="chain" id="PRO_1000077184" description="Serine--tRNA ligase">
    <location>
        <begin position="1"/>
        <end position="423"/>
    </location>
</feature>
<feature type="binding site" evidence="1">
    <location>
        <begin position="231"/>
        <end position="233"/>
    </location>
    <ligand>
        <name>L-serine</name>
        <dbReference type="ChEBI" id="CHEBI:33384"/>
    </ligand>
</feature>
<feature type="binding site" evidence="1">
    <location>
        <begin position="262"/>
        <end position="264"/>
    </location>
    <ligand>
        <name>ATP</name>
        <dbReference type="ChEBI" id="CHEBI:30616"/>
    </ligand>
</feature>
<feature type="binding site" evidence="1">
    <location>
        <position position="285"/>
    </location>
    <ligand>
        <name>L-serine</name>
        <dbReference type="ChEBI" id="CHEBI:33384"/>
    </ligand>
</feature>
<feature type="binding site" evidence="1">
    <location>
        <begin position="349"/>
        <end position="352"/>
    </location>
    <ligand>
        <name>ATP</name>
        <dbReference type="ChEBI" id="CHEBI:30616"/>
    </ligand>
</feature>
<feature type="binding site" evidence="1">
    <location>
        <position position="385"/>
    </location>
    <ligand>
        <name>L-serine</name>
        <dbReference type="ChEBI" id="CHEBI:33384"/>
    </ligand>
</feature>
<proteinExistence type="inferred from homology"/>
<protein>
    <recommendedName>
        <fullName evidence="1">Serine--tRNA ligase</fullName>
        <ecNumber evidence="1">6.1.1.11</ecNumber>
    </recommendedName>
    <alternativeName>
        <fullName evidence="1">Seryl-tRNA synthetase</fullName>
        <shortName evidence="1">SerRS</shortName>
    </alternativeName>
    <alternativeName>
        <fullName evidence="1">Seryl-tRNA(Ser/Sec) synthetase</fullName>
    </alternativeName>
</protein>
<comment type="function">
    <text evidence="1">Catalyzes the attachment of serine to tRNA(Ser). Is also able to aminoacylate tRNA(Sec) with serine, to form the misacylated tRNA L-seryl-tRNA(Sec), which will be further converted into selenocysteinyl-tRNA(Sec).</text>
</comment>
<comment type="catalytic activity">
    <reaction evidence="1">
        <text>tRNA(Ser) + L-serine + ATP = L-seryl-tRNA(Ser) + AMP + diphosphate + H(+)</text>
        <dbReference type="Rhea" id="RHEA:12292"/>
        <dbReference type="Rhea" id="RHEA-COMP:9669"/>
        <dbReference type="Rhea" id="RHEA-COMP:9703"/>
        <dbReference type="ChEBI" id="CHEBI:15378"/>
        <dbReference type="ChEBI" id="CHEBI:30616"/>
        <dbReference type="ChEBI" id="CHEBI:33019"/>
        <dbReference type="ChEBI" id="CHEBI:33384"/>
        <dbReference type="ChEBI" id="CHEBI:78442"/>
        <dbReference type="ChEBI" id="CHEBI:78533"/>
        <dbReference type="ChEBI" id="CHEBI:456215"/>
        <dbReference type="EC" id="6.1.1.11"/>
    </reaction>
</comment>
<comment type="catalytic activity">
    <reaction evidence="1">
        <text>tRNA(Sec) + L-serine + ATP = L-seryl-tRNA(Sec) + AMP + diphosphate + H(+)</text>
        <dbReference type="Rhea" id="RHEA:42580"/>
        <dbReference type="Rhea" id="RHEA-COMP:9742"/>
        <dbReference type="Rhea" id="RHEA-COMP:10128"/>
        <dbReference type="ChEBI" id="CHEBI:15378"/>
        <dbReference type="ChEBI" id="CHEBI:30616"/>
        <dbReference type="ChEBI" id="CHEBI:33019"/>
        <dbReference type="ChEBI" id="CHEBI:33384"/>
        <dbReference type="ChEBI" id="CHEBI:78442"/>
        <dbReference type="ChEBI" id="CHEBI:78533"/>
        <dbReference type="ChEBI" id="CHEBI:456215"/>
        <dbReference type="EC" id="6.1.1.11"/>
    </reaction>
</comment>
<comment type="pathway">
    <text evidence="1">Aminoacyl-tRNA biosynthesis; selenocysteinyl-tRNA(Sec) biosynthesis; L-seryl-tRNA(Sec) from L-serine and tRNA(Sec): step 1/1.</text>
</comment>
<comment type="subunit">
    <text evidence="1">Homodimer. The tRNA molecule binds across the dimer.</text>
</comment>
<comment type="subcellular location">
    <subcellularLocation>
        <location evidence="1">Cytoplasm</location>
    </subcellularLocation>
</comment>
<comment type="domain">
    <text evidence="1">Consists of two distinct domains, a catalytic core and a N-terminal extension that is involved in tRNA binding.</text>
</comment>
<comment type="similarity">
    <text evidence="1">Belongs to the class-II aminoacyl-tRNA synthetase family. Type-1 seryl-tRNA synthetase subfamily.</text>
</comment>
<organism>
    <name type="scientific">Acholeplasma laidlawii (strain PG-8A)</name>
    <dbReference type="NCBI Taxonomy" id="441768"/>
    <lineage>
        <taxon>Bacteria</taxon>
        <taxon>Bacillati</taxon>
        <taxon>Mycoplasmatota</taxon>
        <taxon>Mollicutes</taxon>
        <taxon>Acholeplasmatales</taxon>
        <taxon>Acholeplasmataceae</taxon>
        <taxon>Acholeplasma</taxon>
    </lineage>
</organism>
<accession>A9NE72</accession>
<reference key="1">
    <citation type="journal article" date="2011" name="J. Bacteriol.">
        <title>Complete genome and proteome of Acholeplasma laidlawii.</title>
        <authorList>
            <person name="Lazarev V.N."/>
            <person name="Levitskii S.A."/>
            <person name="Basovskii Y.I."/>
            <person name="Chukin M.M."/>
            <person name="Akopian T.A."/>
            <person name="Vereshchagin V.V."/>
            <person name="Kostrjukova E.S."/>
            <person name="Kovaleva G.Y."/>
            <person name="Kazanov M.D."/>
            <person name="Malko D.B."/>
            <person name="Vitreschak A.G."/>
            <person name="Sernova N.V."/>
            <person name="Gelfand M.S."/>
            <person name="Demina I.A."/>
            <person name="Serebryakova M.V."/>
            <person name="Galyamina M.A."/>
            <person name="Vtyurin N.N."/>
            <person name="Rogov S.I."/>
            <person name="Alexeev D.G."/>
            <person name="Ladygina V.G."/>
            <person name="Govorun V.M."/>
        </authorList>
    </citation>
    <scope>NUCLEOTIDE SEQUENCE [LARGE SCALE GENOMIC DNA]</scope>
    <source>
        <strain>PG-8A</strain>
    </source>
</reference>
<evidence type="ECO:0000255" key="1">
    <source>
        <dbReference type="HAMAP-Rule" id="MF_00176"/>
    </source>
</evidence>
<keyword id="KW-0030">Aminoacyl-tRNA synthetase</keyword>
<keyword id="KW-0067">ATP-binding</keyword>
<keyword id="KW-0963">Cytoplasm</keyword>
<keyword id="KW-0436">Ligase</keyword>
<keyword id="KW-0547">Nucleotide-binding</keyword>
<keyword id="KW-0648">Protein biosynthesis</keyword>
<keyword id="KW-1185">Reference proteome</keyword>
<name>SYS_ACHLI</name>